<name>GGTA1_ALOCA</name>
<organism>
    <name type="scientific">Alouatta caraya</name>
    <name type="common">Black howler monkey</name>
    <dbReference type="NCBI Taxonomy" id="9502"/>
    <lineage>
        <taxon>Eukaryota</taxon>
        <taxon>Metazoa</taxon>
        <taxon>Chordata</taxon>
        <taxon>Craniata</taxon>
        <taxon>Vertebrata</taxon>
        <taxon>Euteleostomi</taxon>
        <taxon>Mammalia</taxon>
        <taxon>Eutheria</taxon>
        <taxon>Euarchontoglires</taxon>
        <taxon>Primates</taxon>
        <taxon>Haplorrhini</taxon>
        <taxon>Platyrrhini</taxon>
        <taxon>Atelidae</taxon>
        <taxon>Alouattinae</taxon>
        <taxon>Alouatta</taxon>
    </lineage>
</organism>
<reference key="1">
    <citation type="journal article" date="2007" name="Proc. Natl. Acad. Sci. U.S.A.">
        <title>Functionally important glycosyltransferase gain and loss during catarrhine primate emergence.</title>
        <authorList>
            <person name="Koike C."/>
            <person name="Uddin M."/>
            <person name="Wildman D.E."/>
            <person name="Gray E.A."/>
            <person name="Trucco M."/>
            <person name="Starzl T.E."/>
            <person name="Goodman M."/>
        </authorList>
    </citation>
    <scope>NUCLEOTIDE SEQUENCE [MRNA]</scope>
</reference>
<gene>
    <name type="primary">GGTA1</name>
</gene>
<sequence length="376" mass="44364">MNVKGNVILSMLAVSTVIAVFWEYINSPEGSFLWIYHSKNPEADDSSAQKGWWFPGWFNNGIHNYQQQEEDTDKEKGKEEEQRKEDDTTQLWLWDWFNPKKRPEVVTVTKWKAPVVWEGTYNKAILENYYAKQKITVGLMVFAIGRYIEHYLEEFITSANRYFMVGHKVIFYVMVDDVPKVPFIELGPLRSFKVFEVKPEKRWQDICMMSMKTIGEHILAHIQHEVDFLFCMDVDQVFQDHFGVETLGQSVAQLQAWWYKVDPDDFTYERRKESAAYIPFGQGDFYYYAAIFGGTPIQVLSITQECFKGILLDKKNDIEAEWHDESHLNKYFLLNKPSKILSPEYCWDYHIGLPSDIKTVKLPWQTKEYNLVRNNV</sequence>
<protein>
    <recommendedName>
        <fullName>N-acetyllactosaminide alpha-1,3-galactosyltransferase</fullName>
        <ecNumber evidence="2">2.4.1.87</ecNumber>
    </recommendedName>
    <alternativeName>
        <fullName>UDP-galactose:beta-D-galactosyl-1,4-N-acetyl-D-glucosaminide alpha-1,3-galactosyltransferase</fullName>
        <shortName>Galactosyltransferase</shortName>
    </alternativeName>
</protein>
<evidence type="ECO:0000250" key="1"/>
<evidence type="ECO:0000250" key="2">
    <source>
        <dbReference type="UniProtKB" id="P14769"/>
    </source>
</evidence>
<evidence type="ECO:0000255" key="3"/>
<evidence type="ECO:0000305" key="4"/>
<accession>A1YGR5</accession>
<keyword id="KW-0328">Glycosyltransferase</keyword>
<keyword id="KW-0333">Golgi apparatus</keyword>
<keyword id="KW-0464">Manganese</keyword>
<keyword id="KW-0472">Membrane</keyword>
<keyword id="KW-0479">Metal-binding</keyword>
<keyword id="KW-0735">Signal-anchor</keyword>
<keyword id="KW-0808">Transferase</keyword>
<keyword id="KW-0812">Transmembrane</keyword>
<keyword id="KW-1133">Transmembrane helix</keyword>
<dbReference type="EC" id="2.4.1.87" evidence="2"/>
<dbReference type="EMBL" id="DQ985356">
    <property type="protein sequence ID" value="ABL85465.1"/>
    <property type="molecule type" value="mRNA"/>
</dbReference>
<dbReference type="SMR" id="A1YGR5"/>
<dbReference type="CAZy" id="GT6">
    <property type="family name" value="Glycosyltransferase Family 6"/>
</dbReference>
<dbReference type="BRENDA" id="2.4.1.87">
    <property type="organism ID" value="9187"/>
</dbReference>
<dbReference type="UniPathway" id="UPA00378"/>
<dbReference type="GO" id="GO:0031985">
    <property type="term" value="C:Golgi cisterna"/>
    <property type="evidence" value="ECO:0000250"/>
    <property type="project" value="UniProtKB"/>
</dbReference>
<dbReference type="GO" id="GO:0032580">
    <property type="term" value="C:Golgi cisterna membrane"/>
    <property type="evidence" value="ECO:0007669"/>
    <property type="project" value="UniProtKB-SubCell"/>
</dbReference>
<dbReference type="GO" id="GO:0031982">
    <property type="term" value="C:vesicle"/>
    <property type="evidence" value="ECO:0007669"/>
    <property type="project" value="TreeGrafter"/>
</dbReference>
<dbReference type="GO" id="GO:0046872">
    <property type="term" value="F:metal ion binding"/>
    <property type="evidence" value="ECO:0007669"/>
    <property type="project" value="UniProtKB-KW"/>
</dbReference>
<dbReference type="GO" id="GO:0047276">
    <property type="term" value="F:N-acetyllactosaminide 3-alpha-galactosyltransferase activity"/>
    <property type="evidence" value="ECO:0007669"/>
    <property type="project" value="UniProtKB-EC"/>
</dbReference>
<dbReference type="GO" id="GO:0005975">
    <property type="term" value="P:carbohydrate metabolic process"/>
    <property type="evidence" value="ECO:0007669"/>
    <property type="project" value="InterPro"/>
</dbReference>
<dbReference type="GO" id="GO:0030259">
    <property type="term" value="P:lipid glycosylation"/>
    <property type="evidence" value="ECO:0007669"/>
    <property type="project" value="TreeGrafter"/>
</dbReference>
<dbReference type="GO" id="GO:0006486">
    <property type="term" value="P:protein glycosylation"/>
    <property type="evidence" value="ECO:0007669"/>
    <property type="project" value="UniProtKB-UniPathway"/>
</dbReference>
<dbReference type="CDD" id="cd02515">
    <property type="entry name" value="Glyco_transf_6"/>
    <property type="match status" value="1"/>
</dbReference>
<dbReference type="FunFam" id="3.90.550.10:FF:000022">
    <property type="entry name" value="Histo-blood group ABO system transferase"/>
    <property type="match status" value="1"/>
</dbReference>
<dbReference type="Gene3D" id="3.90.550.10">
    <property type="entry name" value="Spore Coat Polysaccharide Biosynthesis Protein SpsA, Chain A"/>
    <property type="match status" value="1"/>
</dbReference>
<dbReference type="InterPro" id="IPR005076">
    <property type="entry name" value="Glyco_trans_6"/>
</dbReference>
<dbReference type="InterPro" id="IPR029044">
    <property type="entry name" value="Nucleotide-diphossugar_trans"/>
</dbReference>
<dbReference type="PANTHER" id="PTHR10462">
    <property type="entry name" value="GLYCOSYLTRANSFERASE-RELATED"/>
    <property type="match status" value="1"/>
</dbReference>
<dbReference type="PANTHER" id="PTHR10462:SF26">
    <property type="entry name" value="N-ACETYLLACTOSAMINIDE ALPHA-1,3-GALACTOSYLTRANSFERASE"/>
    <property type="match status" value="1"/>
</dbReference>
<dbReference type="Pfam" id="PF03414">
    <property type="entry name" value="Glyco_transf_6"/>
    <property type="match status" value="1"/>
</dbReference>
<dbReference type="SUPFAM" id="SSF53448">
    <property type="entry name" value="Nucleotide-diphospho-sugar transferases"/>
    <property type="match status" value="1"/>
</dbReference>
<feature type="chain" id="PRO_0000333697" description="N-acetyllactosaminide alpha-1,3-galactosyltransferase">
    <location>
        <begin position="1"/>
        <end position="376"/>
    </location>
</feature>
<feature type="topological domain" description="Cytoplasmic" evidence="3">
    <location>
        <begin position="1"/>
        <end position="4"/>
    </location>
</feature>
<feature type="transmembrane region" description="Helical; Signal-anchor for type II membrane protein" evidence="3">
    <location>
        <begin position="5"/>
        <end position="25"/>
    </location>
</feature>
<feature type="topological domain" description="Lumenal" evidence="3">
    <location>
        <begin position="26"/>
        <end position="376"/>
    </location>
</feature>
<feature type="active site" description="Nucleophile" evidence="2">
    <location>
        <position position="325"/>
    </location>
</feature>
<feature type="binding site" evidence="2">
    <location>
        <begin position="142"/>
        <end position="147"/>
    </location>
    <ligand>
        <name>substrate</name>
    </ligand>
</feature>
<feature type="binding site" evidence="2">
    <location>
        <begin position="233"/>
        <end position="235"/>
    </location>
    <ligand>
        <name>substrate</name>
    </ligand>
</feature>
<feature type="binding site" evidence="2">
    <location>
        <position position="233"/>
    </location>
    <ligand>
        <name>Mn(2+)</name>
        <dbReference type="ChEBI" id="CHEBI:29035"/>
    </ligand>
</feature>
<feature type="binding site" evidence="2">
    <location>
        <position position="235"/>
    </location>
    <ligand>
        <name>Mn(2+)</name>
        <dbReference type="ChEBI" id="CHEBI:29035"/>
    </ligand>
</feature>
<feature type="binding site" evidence="2">
    <location>
        <begin position="255"/>
        <end position="258"/>
    </location>
    <ligand>
        <name>substrate</name>
    </ligand>
</feature>
<feature type="binding site" evidence="2">
    <location>
        <position position="267"/>
    </location>
    <ligand>
        <name>substrate</name>
    </ligand>
</feature>
<feature type="binding site" evidence="2">
    <location>
        <begin position="367"/>
        <end position="373"/>
    </location>
    <ligand>
        <name>substrate</name>
    </ligand>
</feature>
<proteinExistence type="evidence at transcript level"/>
<comment type="function">
    <text evidence="1">Synthesizes the galactose-alpha(1,3)-galactose group by catalyzing the transfer of a galactose residue, with an alpha-1,3 linkage, on terminal lactosaminide (Gal-beta-1,4-GlcNAc-R) disaccharide borne by a glycoprotein or a glycolipid. Preferentially glycosylates proteins, can synthesize galactose-alpha(1,3)-galactose on glycoproteins but cannot synthesize the glycolipid called isoglobotrihexosylceramide or isogloboside 3 (iGb3) (By similarity).</text>
</comment>
<comment type="catalytic activity">
    <reaction evidence="2">
        <text>a beta-D-galactosyl-(1-&gt;4)-N-acetyl-beta-D-glucosaminyl derivative + UDP-alpha-D-galactose = an alpha-D-galactosyl-(1-&gt;3)-beta-D-galactosyl-(1-&gt;4)-N-acetyl-beta-D-glucosaminyl derivative + UDP + H(+)</text>
        <dbReference type="Rhea" id="RHEA:13013"/>
        <dbReference type="ChEBI" id="CHEBI:15378"/>
        <dbReference type="ChEBI" id="CHEBI:58223"/>
        <dbReference type="ChEBI" id="CHEBI:66914"/>
        <dbReference type="ChEBI" id="CHEBI:133507"/>
        <dbReference type="ChEBI" id="CHEBI:138024"/>
        <dbReference type="EC" id="2.4.1.87"/>
    </reaction>
</comment>
<comment type="cofactor">
    <cofactor evidence="2">
        <name>Mn(2+)</name>
        <dbReference type="ChEBI" id="CHEBI:29035"/>
    </cofactor>
    <text evidence="2">Binds 1 Mn(2+) ion per subunit.</text>
</comment>
<comment type="pathway">
    <text evidence="2">Protein modification; protein glycosylation.</text>
</comment>
<comment type="subcellular location">
    <subcellularLocation>
        <location evidence="1">Golgi apparatus</location>
        <location evidence="1">Golgi stack membrane</location>
        <topology evidence="1">Single-pass type II membrane protein</topology>
    </subcellularLocation>
    <text evidence="1">Membrane-bound form in trans cisternae of Golgi.</text>
</comment>
<comment type="domain">
    <text evidence="1">The conserved DXD motif is involved in cofactor binding. The manganese ion interacts with the beta-phosphate group of UDP and may also have a role in catalysis (By similarity).</text>
</comment>
<comment type="similarity">
    <text evidence="4">Belongs to the glycosyltransferase 6 family.</text>
</comment>